<organism>
    <name type="scientific">Arabidopsis thaliana</name>
    <name type="common">Mouse-ear cress</name>
    <dbReference type="NCBI Taxonomy" id="3702"/>
    <lineage>
        <taxon>Eukaryota</taxon>
        <taxon>Viridiplantae</taxon>
        <taxon>Streptophyta</taxon>
        <taxon>Embryophyta</taxon>
        <taxon>Tracheophyta</taxon>
        <taxon>Spermatophyta</taxon>
        <taxon>Magnoliopsida</taxon>
        <taxon>eudicotyledons</taxon>
        <taxon>Gunneridae</taxon>
        <taxon>Pentapetalae</taxon>
        <taxon>rosids</taxon>
        <taxon>malvids</taxon>
        <taxon>Brassicales</taxon>
        <taxon>Brassicaceae</taxon>
        <taxon>Camelineae</taxon>
        <taxon>Arabidopsis</taxon>
    </lineage>
</organism>
<feature type="chain" id="PRO_0000401353" description="Putative receptor-like protein kinase At1g72540">
    <location>
        <begin position="1"/>
        <end position="450"/>
    </location>
</feature>
<feature type="domain" description="Protein kinase" evidence="2">
    <location>
        <begin position="84"/>
        <end position="365"/>
    </location>
</feature>
<feature type="active site" description="Proton acceptor" evidence="2 3">
    <location>
        <position position="214"/>
    </location>
</feature>
<feature type="binding site" evidence="2">
    <location>
        <begin position="90"/>
        <end position="98"/>
    </location>
    <ligand>
        <name>ATP</name>
        <dbReference type="ChEBI" id="CHEBI:30616"/>
    </ligand>
</feature>
<feature type="binding site" evidence="2">
    <location>
        <position position="119"/>
    </location>
    <ligand>
        <name>ATP</name>
        <dbReference type="ChEBI" id="CHEBI:30616"/>
    </ligand>
</feature>
<feature type="modified residue" description="Phosphothreonine" evidence="1">
    <location>
        <position position="73"/>
    </location>
</feature>
<feature type="modified residue" description="Phosphotyrosine" evidence="1">
    <location>
        <position position="164"/>
    </location>
</feature>
<feature type="modified residue" description="Phosphoserine" evidence="1">
    <location>
        <position position="218"/>
    </location>
</feature>
<feature type="modified residue" description="Phosphothreonine" evidence="1">
    <location>
        <position position="254"/>
    </location>
</feature>
<feature type="modified residue" description="Phosphotyrosine" evidence="1">
    <location>
        <position position="262"/>
    </location>
</feature>
<keyword id="KW-0067">ATP-binding</keyword>
<keyword id="KW-0418">Kinase</keyword>
<keyword id="KW-0547">Nucleotide-binding</keyword>
<keyword id="KW-0597">Phosphoprotein</keyword>
<keyword id="KW-1185">Reference proteome</keyword>
<keyword id="KW-0723">Serine/threonine-protein kinase</keyword>
<keyword id="KW-0808">Transferase</keyword>
<dbReference type="EC" id="2.7.11.1"/>
<dbReference type="EMBL" id="AC010926">
    <property type="protein sequence ID" value="AAG51840.1"/>
    <property type="molecule type" value="Genomic_DNA"/>
</dbReference>
<dbReference type="EMBL" id="CP002684">
    <property type="protein sequence ID" value="AEE35337.1"/>
    <property type="molecule type" value="Genomic_DNA"/>
</dbReference>
<dbReference type="PIR" id="G96749">
    <property type="entry name" value="G96749"/>
</dbReference>
<dbReference type="RefSeq" id="NP_177398.1">
    <property type="nucleotide sequence ID" value="NM_105913.2"/>
</dbReference>
<dbReference type="SMR" id="Q9CAH1"/>
<dbReference type="FunCoup" id="Q9CAH1">
    <property type="interactions" value="863"/>
</dbReference>
<dbReference type="STRING" id="3702.Q9CAH1"/>
<dbReference type="iPTMnet" id="Q9CAH1"/>
<dbReference type="PaxDb" id="3702-AT1G72540.1"/>
<dbReference type="EnsemblPlants" id="AT1G72540.1">
    <property type="protein sequence ID" value="AT1G72540.1"/>
    <property type="gene ID" value="AT1G72540"/>
</dbReference>
<dbReference type="GeneID" id="843586"/>
<dbReference type="Gramene" id="AT1G72540.1">
    <property type="protein sequence ID" value="AT1G72540.1"/>
    <property type="gene ID" value="AT1G72540"/>
</dbReference>
<dbReference type="KEGG" id="ath:AT1G72540"/>
<dbReference type="Araport" id="AT1G72540"/>
<dbReference type="TAIR" id="AT1G72540">
    <property type="gene designation" value="PBL33"/>
</dbReference>
<dbReference type="eggNOG" id="KOG1187">
    <property type="taxonomic scope" value="Eukaryota"/>
</dbReference>
<dbReference type="HOGENOM" id="CLU_000288_21_2_1"/>
<dbReference type="InParanoid" id="Q9CAH1"/>
<dbReference type="OMA" id="WKNTCLP"/>
<dbReference type="PhylomeDB" id="Q9CAH1"/>
<dbReference type="PRO" id="PR:Q9CAH1"/>
<dbReference type="Proteomes" id="UP000006548">
    <property type="component" value="Chromosome 1"/>
</dbReference>
<dbReference type="ExpressionAtlas" id="Q9CAH1">
    <property type="expression patterns" value="baseline and differential"/>
</dbReference>
<dbReference type="GO" id="GO:0005524">
    <property type="term" value="F:ATP binding"/>
    <property type="evidence" value="ECO:0007669"/>
    <property type="project" value="UniProtKB-KW"/>
</dbReference>
<dbReference type="GO" id="GO:0106310">
    <property type="term" value="F:protein serine kinase activity"/>
    <property type="evidence" value="ECO:0007669"/>
    <property type="project" value="RHEA"/>
</dbReference>
<dbReference type="GO" id="GO:0004674">
    <property type="term" value="F:protein serine/threonine kinase activity"/>
    <property type="evidence" value="ECO:0007669"/>
    <property type="project" value="UniProtKB-KW"/>
</dbReference>
<dbReference type="CDD" id="cd14066">
    <property type="entry name" value="STKc_IRAK"/>
    <property type="match status" value="1"/>
</dbReference>
<dbReference type="FunFam" id="1.10.510.10:FF:000095">
    <property type="entry name" value="protein STRUBBELIG-RECEPTOR FAMILY 8"/>
    <property type="match status" value="1"/>
</dbReference>
<dbReference type="FunFam" id="3.30.200.20:FF:000228">
    <property type="entry name" value="Serine/threonine-protein kinase BIK1"/>
    <property type="match status" value="1"/>
</dbReference>
<dbReference type="Gene3D" id="3.30.200.20">
    <property type="entry name" value="Phosphorylase Kinase, domain 1"/>
    <property type="match status" value="1"/>
</dbReference>
<dbReference type="Gene3D" id="1.10.510.10">
    <property type="entry name" value="Transferase(Phosphotransferase) domain 1"/>
    <property type="match status" value="1"/>
</dbReference>
<dbReference type="InterPro" id="IPR011009">
    <property type="entry name" value="Kinase-like_dom_sf"/>
</dbReference>
<dbReference type="InterPro" id="IPR050823">
    <property type="entry name" value="Plant_Ser_Thr_Prot_Kinase"/>
</dbReference>
<dbReference type="InterPro" id="IPR000719">
    <property type="entry name" value="Prot_kinase_dom"/>
</dbReference>
<dbReference type="InterPro" id="IPR017441">
    <property type="entry name" value="Protein_kinase_ATP_BS"/>
</dbReference>
<dbReference type="InterPro" id="IPR008271">
    <property type="entry name" value="Ser/Thr_kinase_AS"/>
</dbReference>
<dbReference type="PANTHER" id="PTHR45621">
    <property type="entry name" value="OS01G0588500 PROTEIN-RELATED"/>
    <property type="match status" value="1"/>
</dbReference>
<dbReference type="Pfam" id="PF00069">
    <property type="entry name" value="Pkinase"/>
    <property type="match status" value="1"/>
</dbReference>
<dbReference type="SUPFAM" id="SSF56112">
    <property type="entry name" value="Protein kinase-like (PK-like)"/>
    <property type="match status" value="1"/>
</dbReference>
<dbReference type="PROSITE" id="PS00107">
    <property type="entry name" value="PROTEIN_KINASE_ATP"/>
    <property type="match status" value="1"/>
</dbReference>
<dbReference type="PROSITE" id="PS50011">
    <property type="entry name" value="PROTEIN_KINASE_DOM"/>
    <property type="match status" value="1"/>
</dbReference>
<dbReference type="PROSITE" id="PS00108">
    <property type="entry name" value="PROTEIN_KINASE_ST"/>
    <property type="match status" value="1"/>
</dbReference>
<reference key="1">
    <citation type="journal article" date="2000" name="Nature">
        <title>Sequence and analysis of chromosome 1 of the plant Arabidopsis thaliana.</title>
        <authorList>
            <person name="Theologis A."/>
            <person name="Ecker J.R."/>
            <person name="Palm C.J."/>
            <person name="Federspiel N.A."/>
            <person name="Kaul S."/>
            <person name="White O."/>
            <person name="Alonso J."/>
            <person name="Altafi H."/>
            <person name="Araujo R."/>
            <person name="Bowman C.L."/>
            <person name="Brooks S.Y."/>
            <person name="Buehler E."/>
            <person name="Chan A."/>
            <person name="Chao Q."/>
            <person name="Chen H."/>
            <person name="Cheuk R.F."/>
            <person name="Chin C.W."/>
            <person name="Chung M.K."/>
            <person name="Conn L."/>
            <person name="Conway A.B."/>
            <person name="Conway A.R."/>
            <person name="Creasy T.H."/>
            <person name="Dewar K."/>
            <person name="Dunn P."/>
            <person name="Etgu P."/>
            <person name="Feldblyum T.V."/>
            <person name="Feng J.-D."/>
            <person name="Fong B."/>
            <person name="Fujii C.Y."/>
            <person name="Gill J.E."/>
            <person name="Goldsmith A.D."/>
            <person name="Haas B."/>
            <person name="Hansen N.F."/>
            <person name="Hughes B."/>
            <person name="Huizar L."/>
            <person name="Hunter J.L."/>
            <person name="Jenkins J."/>
            <person name="Johnson-Hopson C."/>
            <person name="Khan S."/>
            <person name="Khaykin E."/>
            <person name="Kim C.J."/>
            <person name="Koo H.L."/>
            <person name="Kremenetskaia I."/>
            <person name="Kurtz D.B."/>
            <person name="Kwan A."/>
            <person name="Lam B."/>
            <person name="Langin-Hooper S."/>
            <person name="Lee A."/>
            <person name="Lee J.M."/>
            <person name="Lenz C.A."/>
            <person name="Li J.H."/>
            <person name="Li Y.-P."/>
            <person name="Lin X."/>
            <person name="Liu S.X."/>
            <person name="Liu Z.A."/>
            <person name="Luros J.S."/>
            <person name="Maiti R."/>
            <person name="Marziali A."/>
            <person name="Militscher J."/>
            <person name="Miranda M."/>
            <person name="Nguyen M."/>
            <person name="Nierman W.C."/>
            <person name="Osborne B.I."/>
            <person name="Pai G."/>
            <person name="Peterson J."/>
            <person name="Pham P.K."/>
            <person name="Rizzo M."/>
            <person name="Rooney T."/>
            <person name="Rowley D."/>
            <person name="Sakano H."/>
            <person name="Salzberg S.L."/>
            <person name="Schwartz J.R."/>
            <person name="Shinn P."/>
            <person name="Southwick A.M."/>
            <person name="Sun H."/>
            <person name="Tallon L.J."/>
            <person name="Tambunga G."/>
            <person name="Toriumi M.J."/>
            <person name="Town C.D."/>
            <person name="Utterback T."/>
            <person name="Van Aken S."/>
            <person name="Vaysberg M."/>
            <person name="Vysotskaia V.S."/>
            <person name="Walker M."/>
            <person name="Wu D."/>
            <person name="Yu G."/>
            <person name="Fraser C.M."/>
            <person name="Venter J.C."/>
            <person name="Davis R.W."/>
        </authorList>
    </citation>
    <scope>NUCLEOTIDE SEQUENCE [LARGE SCALE GENOMIC DNA]</scope>
    <source>
        <strain>cv. Columbia</strain>
    </source>
</reference>
<reference key="2">
    <citation type="journal article" date="2017" name="Plant J.">
        <title>Araport11: a complete reannotation of the Arabidopsis thaliana reference genome.</title>
        <authorList>
            <person name="Cheng C.Y."/>
            <person name="Krishnakumar V."/>
            <person name="Chan A.P."/>
            <person name="Thibaud-Nissen F."/>
            <person name="Schobel S."/>
            <person name="Town C.D."/>
        </authorList>
    </citation>
    <scope>GENOME REANNOTATION</scope>
    <source>
        <strain>cv. Columbia</strain>
    </source>
</reference>
<name>Y1725_ARATH</name>
<proteinExistence type="evidence at transcript level"/>
<protein>
    <recommendedName>
        <fullName>Putative receptor-like protein kinase At1g72540</fullName>
        <ecNumber>2.7.11.1</ecNumber>
    </recommendedName>
</protein>
<sequence length="450" mass="50875">MRFSWKNICLPISCINNTNQKKTTTTNPPKEKLLLLSRQTSVPSRVYMSDFSNSTISLNDFSNSFFINIHIFTYEELKTITQGFSKYNFLGEGGFGEVYKGFVDDSLKTGLKDQPVAVKALKREGGQGHREWLAEVIILGQLKHPHLVNLVGYCCEDDERLLVYEYMERGNLEDHLFQKYGGALPWLTRVKILLGAAKGLEFLHKQEKPVIYRDFKPSNILLSSDFSSKLSDFGLATDGSEEEDSNFTKSVMGTEGYAAPEYISAGNLTTMSDVFSFGVVLLEMLTARKAVEKYRAQRGRNLVEWARPMLKDPNKLERIIDPSLEGKYSVEGIRKAAALAYQCLSHNPKSRPTMTTVVKTLEPILDLKDIQNGPFVYIVPVAGVSEVHEIKCKDDVKVVKEETEKDAKVFPRHRAGRRNRRKHKAMRSRAVYSDTALYKSLGTSLYNPAN</sequence>
<gene>
    <name type="ordered locus">At1g72540</name>
    <name type="ORF">F28P22.27</name>
</gene>
<comment type="catalytic activity">
    <reaction>
        <text>L-seryl-[protein] + ATP = O-phospho-L-seryl-[protein] + ADP + H(+)</text>
        <dbReference type="Rhea" id="RHEA:17989"/>
        <dbReference type="Rhea" id="RHEA-COMP:9863"/>
        <dbReference type="Rhea" id="RHEA-COMP:11604"/>
        <dbReference type="ChEBI" id="CHEBI:15378"/>
        <dbReference type="ChEBI" id="CHEBI:29999"/>
        <dbReference type="ChEBI" id="CHEBI:30616"/>
        <dbReference type="ChEBI" id="CHEBI:83421"/>
        <dbReference type="ChEBI" id="CHEBI:456216"/>
        <dbReference type="EC" id="2.7.11.1"/>
    </reaction>
</comment>
<comment type="catalytic activity">
    <reaction>
        <text>L-threonyl-[protein] + ATP = O-phospho-L-threonyl-[protein] + ADP + H(+)</text>
        <dbReference type="Rhea" id="RHEA:46608"/>
        <dbReference type="Rhea" id="RHEA-COMP:11060"/>
        <dbReference type="Rhea" id="RHEA-COMP:11605"/>
        <dbReference type="ChEBI" id="CHEBI:15378"/>
        <dbReference type="ChEBI" id="CHEBI:30013"/>
        <dbReference type="ChEBI" id="CHEBI:30616"/>
        <dbReference type="ChEBI" id="CHEBI:61977"/>
        <dbReference type="ChEBI" id="CHEBI:456216"/>
        <dbReference type="EC" id="2.7.11.1"/>
    </reaction>
</comment>
<comment type="similarity">
    <text evidence="2">Belongs to the protein kinase superfamily. Ser/Thr protein kinase family.</text>
</comment>
<evidence type="ECO:0000250" key="1">
    <source>
        <dbReference type="UniProtKB" id="O48814"/>
    </source>
</evidence>
<evidence type="ECO:0000255" key="2">
    <source>
        <dbReference type="PROSITE-ProRule" id="PRU00159"/>
    </source>
</evidence>
<evidence type="ECO:0000255" key="3">
    <source>
        <dbReference type="PROSITE-ProRule" id="PRU10027"/>
    </source>
</evidence>
<accession>Q9CAH1</accession>